<accession>B4QC10</accession>
<evidence type="ECO:0000250" key="1">
    <source>
        <dbReference type="UniProtKB" id="Q9W157"/>
    </source>
</evidence>
<evidence type="ECO:0000255" key="2"/>
<evidence type="ECO:0000256" key="3">
    <source>
        <dbReference type="SAM" id="MobiDB-lite"/>
    </source>
</evidence>
<evidence type="ECO:0000312" key="4">
    <source>
        <dbReference type="EMBL" id="EDX08565.1"/>
    </source>
</evidence>
<dbReference type="EMBL" id="CM000362">
    <property type="protein sequence ID" value="EDX08565.1"/>
    <property type="molecule type" value="Genomic_DNA"/>
</dbReference>
<dbReference type="STRING" id="7240.B4QC10"/>
<dbReference type="HOGENOM" id="CLU_315529_0_0_1"/>
<dbReference type="OMA" id="ECFSEDM"/>
<dbReference type="OrthoDB" id="21095at2759"/>
<dbReference type="PhylomeDB" id="B4QC10"/>
<dbReference type="Proteomes" id="UP000000304">
    <property type="component" value="Chromosome 2R"/>
</dbReference>
<dbReference type="GO" id="GO:0005634">
    <property type="term" value="C:nucleus"/>
    <property type="evidence" value="ECO:0000250"/>
    <property type="project" value="UniProtKB"/>
</dbReference>
<dbReference type="GO" id="GO:0051301">
    <property type="term" value="P:cell division"/>
    <property type="evidence" value="ECO:0007669"/>
    <property type="project" value="UniProtKB-KW"/>
</dbReference>
<dbReference type="GO" id="GO:0043150">
    <property type="term" value="P:DNA synthesis involved in double-strand break repair via homologous recombination"/>
    <property type="evidence" value="ECO:0000250"/>
    <property type="project" value="UniProtKB"/>
</dbReference>
<dbReference type="GO" id="GO:0010778">
    <property type="term" value="P:meiotic DNA repair synthesis involved in reciprocal meiotic recombination"/>
    <property type="evidence" value="ECO:0000250"/>
    <property type="project" value="UniProtKB"/>
</dbReference>
<dbReference type="GO" id="GO:0051598">
    <property type="term" value="P:meiotic recombination checkpoint signaling"/>
    <property type="evidence" value="ECO:0000250"/>
    <property type="project" value="UniProtKB"/>
</dbReference>
<dbReference type="GO" id="GO:0006355">
    <property type="term" value="P:regulation of DNA-templated transcription"/>
    <property type="evidence" value="ECO:0007669"/>
    <property type="project" value="TreeGrafter"/>
</dbReference>
<dbReference type="GO" id="GO:1901563">
    <property type="term" value="P:response to camptothecin"/>
    <property type="evidence" value="ECO:0007669"/>
    <property type="project" value="EnsemblMetazoa"/>
</dbReference>
<dbReference type="InterPro" id="IPR015525">
    <property type="entry name" value="BRCA2"/>
</dbReference>
<dbReference type="InterPro" id="IPR002093">
    <property type="entry name" value="BRCA2_repeat"/>
</dbReference>
<dbReference type="PANTHER" id="PTHR11289:SF0">
    <property type="entry name" value="BREAST CANCER TYPE 2 SUSCEPTIBILITY PROTEIN"/>
    <property type="match status" value="1"/>
</dbReference>
<dbReference type="PANTHER" id="PTHR11289">
    <property type="entry name" value="BREAST CANCER TYPE 2 SUSCEPTIBILITY PROTEIN BRCA2"/>
    <property type="match status" value="1"/>
</dbReference>
<dbReference type="PROSITE" id="PS50138">
    <property type="entry name" value="BRCA2_REPEAT"/>
    <property type="match status" value="1"/>
</dbReference>
<proteinExistence type="inferred from homology"/>
<name>BRCA2_DROSI</name>
<reference evidence="4" key="1">
    <citation type="journal article" date="2007" name="Nature">
        <title>Evolution of genes and genomes on the Drosophila phylogeny.</title>
        <authorList>
            <consortium name="Drosophila 12 genomes consortium"/>
        </authorList>
    </citation>
    <scope>NUCLEOTIDE SEQUENCE [LARGE SCALE GENOMIC DNA]</scope>
</reference>
<protein>
    <recommendedName>
        <fullName evidence="1">Breast cancer type 2 susceptibility protein homolog</fullName>
    </recommendedName>
</protein>
<keyword id="KW-0131">Cell cycle</keyword>
<keyword id="KW-0132">Cell division</keyword>
<keyword id="KW-0227">DNA damage</keyword>
<keyword id="KW-0234">DNA repair</keyword>
<keyword id="KW-0469">Meiosis</keyword>
<keyword id="KW-0498">Mitosis</keyword>
<keyword id="KW-0539">Nucleus</keyword>
<keyword id="KW-1185">Reference proteome</keyword>
<keyword id="KW-0677">Repeat</keyword>
<feature type="chain" id="PRO_0000392918" description="Breast cancer type 2 susceptibility protein homolog">
    <location>
        <begin position="1"/>
        <end position="944"/>
    </location>
</feature>
<feature type="repeat" description="BRCA2 1" evidence="2">
    <location>
        <begin position="543"/>
        <end position="577"/>
    </location>
</feature>
<feature type="repeat" description="BRCA2 2" evidence="2">
    <location>
        <begin position="644"/>
        <end position="678"/>
    </location>
</feature>
<feature type="repeat" description="BRCA2 3" evidence="2">
    <location>
        <begin position="719"/>
        <end position="753"/>
    </location>
</feature>
<feature type="region of interest" description="Disordered" evidence="3">
    <location>
        <begin position="325"/>
        <end position="354"/>
    </location>
</feature>
<feature type="region of interest" description="Disordered" evidence="3">
    <location>
        <begin position="415"/>
        <end position="440"/>
    </location>
</feature>
<feature type="region of interest" description="Disordered" evidence="3">
    <location>
        <begin position="823"/>
        <end position="854"/>
    </location>
</feature>
<feature type="region of interest" description="Disordered" evidence="3">
    <location>
        <begin position="876"/>
        <end position="944"/>
    </location>
</feature>
<feature type="compositionally biased region" description="Basic and acidic residues" evidence="3">
    <location>
        <begin position="325"/>
        <end position="348"/>
    </location>
</feature>
<feature type="compositionally biased region" description="Basic and acidic residues" evidence="3">
    <location>
        <begin position="415"/>
        <end position="431"/>
    </location>
</feature>
<feature type="compositionally biased region" description="Polar residues" evidence="3">
    <location>
        <begin position="838"/>
        <end position="852"/>
    </location>
</feature>
<feature type="compositionally biased region" description="Polar residues" evidence="3">
    <location>
        <begin position="876"/>
        <end position="885"/>
    </location>
</feature>
<feature type="compositionally biased region" description="Basic and acidic residues" evidence="3">
    <location>
        <begin position="904"/>
        <end position="921"/>
    </location>
</feature>
<feature type="compositionally biased region" description="Basic residues" evidence="3">
    <location>
        <begin position="932"/>
        <end position="944"/>
    </location>
</feature>
<organism>
    <name type="scientific">Drosophila simulans</name>
    <name type="common">Fruit fly</name>
    <dbReference type="NCBI Taxonomy" id="7240"/>
    <lineage>
        <taxon>Eukaryota</taxon>
        <taxon>Metazoa</taxon>
        <taxon>Ecdysozoa</taxon>
        <taxon>Arthropoda</taxon>
        <taxon>Hexapoda</taxon>
        <taxon>Insecta</taxon>
        <taxon>Pterygota</taxon>
        <taxon>Neoptera</taxon>
        <taxon>Endopterygota</taxon>
        <taxon>Diptera</taxon>
        <taxon>Brachycera</taxon>
        <taxon>Muscomorpha</taxon>
        <taxon>Ephydroidea</taxon>
        <taxon>Drosophilidae</taxon>
        <taxon>Drosophila</taxon>
        <taxon>Sophophora</taxon>
    </lineage>
</organism>
<comment type="function">
    <text evidence="1">Involved in and required for double-strand break repair by meiotic and mitotic homologous recombination. During meiosis, has a dual role in the repair of meiotic double-stranded breaks and the efficient activation of the meiotic recombination checkpoint (By similarity).</text>
</comment>
<comment type="subunit">
    <text evidence="1">Interacts with Rad9 and spn-A/Rad51.</text>
</comment>
<comment type="subcellular location">
    <subcellularLocation>
        <location evidence="1">Nucleus</location>
    </subcellularLocation>
    <text evidence="1">Brca2 and spn-A become recruited to nuclear foci after DNA damage.</text>
</comment>
<gene>
    <name evidence="1" type="primary">Brca2</name>
    <name type="ORF">GD11868</name>
</gene>
<sequence>MDQNGASGSRPNRLSQGKEAYACERSATVSAAADRSNIINEMAKICEADRQTSAIARRTQVHERLAVANSDFVAVEDLILAYAEPTPEDQVEMIMRDFCSSPTYEEDEDEPSYESEPWFRFRNKRIRTYSRKRDPKSYMAVRTEKSSGTSGLSVQRDLNTSSTSVACDFDAASSQKIHEVLLNLSQYFSATAKASSPTPVPSQIDLPTEARQDSGDECFNAEVENLRDDLLQNGFTFEASIYDNEHEQEDSGKFNVCSDADSTPKKTDVEIAEHKKHLKGPTQAEHVGKEENTNFILEGIPLSEWLTPMEPPKISKDVIKNIPDKKVKLEPSSQKEQKSSKDSNESKIRAASCDITKKNEGTTVLDQPNAAQQENLSNDGDLLEEFLFNEWHPMQCSNGPSTSNDAIKVPKEEINSIKRNDEEQPEKETPNKSRSTSSHQLSFRKTFLKFIEISGEMKIKGEKFVEKVVSGLHHPSHKCNLRTEEYSDNHSQVMESTQRVEFKSALSKPIELLDEKETYDMLAKVEVGEINGKCSPLNNETIAEPEFCGFRTASNKAIPISEKMKIKTAEFMAEFQSKETNHQNDYLVNQPNDNSTSVGRDTAFKKSIEISEEMPTKASKLVVVDTTLGEPHQPKIDPVCSDLNESQFFGFRTASNKAIEITEAMEKRGAMFLAQSRATDQQAEWQPSDFPDIPHTSPKNEIHSINVENTKAVHTKTASETEFFGFRTASNKGIVISENTKKKVAQFMSEFQAADASTDSNKPIVISEESRNIAAKFVDEAATEDSPNKPTFCNVQSQENPLDIEHFKHDLFVERSAKEEHPLCSQPLVRTPRRSQEIHSSLSQLAGQSPLDQATKKSVIARRNLLSLKRKRKIVSSTETSTSCASPAMERFAPKPSSTSTPLADRDLNRSKDCAKNRQDAEDMSPICMQPKKSRRLGLSRSRY</sequence>